<organism>
    <name type="scientific">Wigglesworthia glossinidia brevipalpis</name>
    <dbReference type="NCBI Taxonomy" id="36870"/>
    <lineage>
        <taxon>Bacteria</taxon>
        <taxon>Pseudomonadati</taxon>
        <taxon>Pseudomonadota</taxon>
        <taxon>Gammaproteobacteria</taxon>
        <taxon>Enterobacterales</taxon>
        <taxon>Erwiniaceae</taxon>
        <taxon>Wigglesworthia</taxon>
    </lineage>
</organism>
<proteinExistence type="inferred from homology"/>
<keyword id="KW-0648">Protein biosynthesis</keyword>
<keyword id="KW-1185">Reference proteome</keyword>
<keyword id="KW-0808">Transferase</keyword>
<sequence length="319" mass="36018">MNSSKSLRIVFAGTSQFSYEFLYALLESRHVVVGILANPDRFSGRGHKIKFSPVKKLAKYYNIKILQPDSTESLDNLENDLKKMRCDIIIVVSYSIILSKKILSLPRLGCINLHSSLLPRWRGAAPIHRALQSGDKTTGITIIKMNDEIDTGPILYKRVCSIQDTDTTETLLNKLSIIGKAAIIQLLHQISIGKYNLQYQNNSIATYAKKINKKEAKINWNLPAINIDRNIRAFNPWPVSYFWISGKYIRAWKAKIDINNIFISDPGKILNVNSDGIHVGTGKGILILEVLQLSGKKRSFVKESLCLYKKLFITGNIIQ</sequence>
<accession>Q8D259</accession>
<gene>
    <name evidence="1" type="primary">fmt</name>
    <name type="ordered locus">WIGBR4950</name>
</gene>
<comment type="function">
    <text evidence="1">Attaches a formyl group to the free amino group of methionyl-tRNA(fMet). The formyl group appears to play a dual role in the initiator identity of N-formylmethionyl-tRNA by promoting its recognition by IF2 and preventing the misappropriation of this tRNA by the elongation apparatus.</text>
</comment>
<comment type="catalytic activity">
    <reaction evidence="1">
        <text>L-methionyl-tRNA(fMet) + (6R)-10-formyltetrahydrofolate = N-formyl-L-methionyl-tRNA(fMet) + (6S)-5,6,7,8-tetrahydrofolate + H(+)</text>
        <dbReference type="Rhea" id="RHEA:24380"/>
        <dbReference type="Rhea" id="RHEA-COMP:9952"/>
        <dbReference type="Rhea" id="RHEA-COMP:9953"/>
        <dbReference type="ChEBI" id="CHEBI:15378"/>
        <dbReference type="ChEBI" id="CHEBI:57453"/>
        <dbReference type="ChEBI" id="CHEBI:78530"/>
        <dbReference type="ChEBI" id="CHEBI:78844"/>
        <dbReference type="ChEBI" id="CHEBI:195366"/>
        <dbReference type="EC" id="2.1.2.9"/>
    </reaction>
</comment>
<comment type="similarity">
    <text evidence="1">Belongs to the Fmt family.</text>
</comment>
<name>FMT_WIGBR</name>
<dbReference type="EC" id="2.1.2.9" evidence="1"/>
<dbReference type="EMBL" id="BA000021">
    <property type="protein sequence ID" value="BAC24641.1"/>
    <property type="molecule type" value="Genomic_DNA"/>
</dbReference>
<dbReference type="SMR" id="Q8D259"/>
<dbReference type="STRING" id="36870.gene:10368999"/>
<dbReference type="KEGG" id="wbr:fmt"/>
<dbReference type="eggNOG" id="COG0223">
    <property type="taxonomic scope" value="Bacteria"/>
</dbReference>
<dbReference type="HOGENOM" id="CLU_033347_1_2_6"/>
<dbReference type="OrthoDB" id="9802815at2"/>
<dbReference type="Proteomes" id="UP000000562">
    <property type="component" value="Chromosome"/>
</dbReference>
<dbReference type="GO" id="GO:0005829">
    <property type="term" value="C:cytosol"/>
    <property type="evidence" value="ECO:0007669"/>
    <property type="project" value="TreeGrafter"/>
</dbReference>
<dbReference type="GO" id="GO:0004479">
    <property type="term" value="F:methionyl-tRNA formyltransferase activity"/>
    <property type="evidence" value="ECO:0007669"/>
    <property type="project" value="UniProtKB-UniRule"/>
</dbReference>
<dbReference type="CDD" id="cd08646">
    <property type="entry name" value="FMT_core_Met-tRNA-FMT_N"/>
    <property type="match status" value="1"/>
</dbReference>
<dbReference type="CDD" id="cd08704">
    <property type="entry name" value="Met_tRNA_FMT_C"/>
    <property type="match status" value="1"/>
</dbReference>
<dbReference type="Gene3D" id="3.10.25.10">
    <property type="entry name" value="Formyl transferase, C-terminal domain"/>
    <property type="match status" value="1"/>
</dbReference>
<dbReference type="Gene3D" id="3.40.50.170">
    <property type="entry name" value="Formyl transferase, N-terminal domain"/>
    <property type="match status" value="1"/>
</dbReference>
<dbReference type="HAMAP" id="MF_00182">
    <property type="entry name" value="Formyl_trans"/>
    <property type="match status" value="1"/>
</dbReference>
<dbReference type="InterPro" id="IPR005794">
    <property type="entry name" value="Fmt"/>
</dbReference>
<dbReference type="InterPro" id="IPR005793">
    <property type="entry name" value="Formyl_trans_C"/>
</dbReference>
<dbReference type="InterPro" id="IPR037022">
    <property type="entry name" value="Formyl_trans_C_sf"/>
</dbReference>
<dbReference type="InterPro" id="IPR002376">
    <property type="entry name" value="Formyl_transf_N"/>
</dbReference>
<dbReference type="InterPro" id="IPR036477">
    <property type="entry name" value="Formyl_transf_N_sf"/>
</dbReference>
<dbReference type="InterPro" id="IPR011034">
    <property type="entry name" value="Formyl_transferase-like_C_sf"/>
</dbReference>
<dbReference type="InterPro" id="IPR001555">
    <property type="entry name" value="GART_AS"/>
</dbReference>
<dbReference type="InterPro" id="IPR044135">
    <property type="entry name" value="Met-tRNA-FMT_C"/>
</dbReference>
<dbReference type="InterPro" id="IPR041711">
    <property type="entry name" value="Met-tRNA-FMT_N"/>
</dbReference>
<dbReference type="NCBIfam" id="TIGR00460">
    <property type="entry name" value="fmt"/>
    <property type="match status" value="1"/>
</dbReference>
<dbReference type="PANTHER" id="PTHR11138">
    <property type="entry name" value="METHIONYL-TRNA FORMYLTRANSFERASE"/>
    <property type="match status" value="1"/>
</dbReference>
<dbReference type="PANTHER" id="PTHR11138:SF5">
    <property type="entry name" value="METHIONYL-TRNA FORMYLTRANSFERASE, MITOCHONDRIAL"/>
    <property type="match status" value="1"/>
</dbReference>
<dbReference type="Pfam" id="PF02911">
    <property type="entry name" value="Formyl_trans_C"/>
    <property type="match status" value="1"/>
</dbReference>
<dbReference type="Pfam" id="PF00551">
    <property type="entry name" value="Formyl_trans_N"/>
    <property type="match status" value="1"/>
</dbReference>
<dbReference type="SUPFAM" id="SSF50486">
    <property type="entry name" value="FMT C-terminal domain-like"/>
    <property type="match status" value="1"/>
</dbReference>
<dbReference type="SUPFAM" id="SSF53328">
    <property type="entry name" value="Formyltransferase"/>
    <property type="match status" value="1"/>
</dbReference>
<dbReference type="PROSITE" id="PS00373">
    <property type="entry name" value="GART"/>
    <property type="match status" value="1"/>
</dbReference>
<protein>
    <recommendedName>
        <fullName evidence="1">Methionyl-tRNA formyltransferase</fullName>
        <ecNumber evidence="1">2.1.2.9</ecNumber>
    </recommendedName>
</protein>
<reference key="1">
    <citation type="journal article" date="2002" name="Nat. Genet.">
        <title>Genome sequence of the endocellular obligate symbiont of tsetse flies, Wigglesworthia glossinidia.</title>
        <authorList>
            <person name="Akman L."/>
            <person name="Yamashita A."/>
            <person name="Watanabe H."/>
            <person name="Oshima K."/>
            <person name="Shiba T."/>
            <person name="Hattori M."/>
            <person name="Aksoy S."/>
        </authorList>
    </citation>
    <scope>NUCLEOTIDE SEQUENCE [LARGE SCALE GENOMIC DNA]</scope>
</reference>
<evidence type="ECO:0000255" key="1">
    <source>
        <dbReference type="HAMAP-Rule" id="MF_00182"/>
    </source>
</evidence>
<feature type="chain" id="PRO_0000083085" description="Methionyl-tRNA formyltransferase">
    <location>
        <begin position="1"/>
        <end position="319"/>
    </location>
</feature>
<feature type="binding site" evidence="1">
    <location>
        <begin position="116"/>
        <end position="119"/>
    </location>
    <ligand>
        <name>(6S)-5,6,7,8-tetrahydrofolate</name>
        <dbReference type="ChEBI" id="CHEBI:57453"/>
    </ligand>
</feature>